<evidence type="ECO:0000250" key="1"/>
<evidence type="ECO:0000255" key="2"/>
<evidence type="ECO:0000256" key="3">
    <source>
        <dbReference type="SAM" id="MobiDB-lite"/>
    </source>
</evidence>
<evidence type="ECO:0000305" key="4"/>
<keyword id="KW-0010">Activator</keyword>
<keyword id="KW-0175">Coiled coil</keyword>
<keyword id="KW-0539">Nucleus</keyword>
<keyword id="KW-1185">Reference proteome</keyword>
<keyword id="KW-0804">Transcription</keyword>
<keyword id="KW-0805">Transcription regulation</keyword>
<organism>
    <name type="scientific">Dictyostelium discoideum</name>
    <name type="common">Social amoeba</name>
    <dbReference type="NCBI Taxonomy" id="44689"/>
    <lineage>
        <taxon>Eukaryota</taxon>
        <taxon>Amoebozoa</taxon>
        <taxon>Evosea</taxon>
        <taxon>Eumycetozoa</taxon>
        <taxon>Dictyostelia</taxon>
        <taxon>Dictyosteliales</taxon>
        <taxon>Dictyosteliaceae</taxon>
        <taxon>Dictyostelium</taxon>
    </lineage>
</organism>
<reference key="1">
    <citation type="journal article" date="2005" name="Nature">
        <title>The genome of the social amoeba Dictyostelium discoideum.</title>
        <authorList>
            <person name="Eichinger L."/>
            <person name="Pachebat J.A."/>
            <person name="Gloeckner G."/>
            <person name="Rajandream M.A."/>
            <person name="Sucgang R."/>
            <person name="Berriman M."/>
            <person name="Song J."/>
            <person name="Olsen R."/>
            <person name="Szafranski K."/>
            <person name="Xu Q."/>
            <person name="Tunggal B."/>
            <person name="Kummerfeld S."/>
            <person name="Madera M."/>
            <person name="Konfortov B.A."/>
            <person name="Rivero F."/>
            <person name="Bankier A.T."/>
            <person name="Lehmann R."/>
            <person name="Hamlin N."/>
            <person name="Davies R."/>
            <person name="Gaudet P."/>
            <person name="Fey P."/>
            <person name="Pilcher K."/>
            <person name="Chen G."/>
            <person name="Saunders D."/>
            <person name="Sodergren E.J."/>
            <person name="Davis P."/>
            <person name="Kerhornou A."/>
            <person name="Nie X."/>
            <person name="Hall N."/>
            <person name="Anjard C."/>
            <person name="Hemphill L."/>
            <person name="Bason N."/>
            <person name="Farbrother P."/>
            <person name="Desany B."/>
            <person name="Just E."/>
            <person name="Morio T."/>
            <person name="Rost R."/>
            <person name="Churcher C.M."/>
            <person name="Cooper J."/>
            <person name="Haydock S."/>
            <person name="van Driessche N."/>
            <person name="Cronin A."/>
            <person name="Goodhead I."/>
            <person name="Muzny D.M."/>
            <person name="Mourier T."/>
            <person name="Pain A."/>
            <person name="Lu M."/>
            <person name="Harper D."/>
            <person name="Lindsay R."/>
            <person name="Hauser H."/>
            <person name="James K.D."/>
            <person name="Quiles M."/>
            <person name="Madan Babu M."/>
            <person name="Saito T."/>
            <person name="Buchrieser C."/>
            <person name="Wardroper A."/>
            <person name="Felder M."/>
            <person name="Thangavelu M."/>
            <person name="Johnson D."/>
            <person name="Knights A."/>
            <person name="Loulseged H."/>
            <person name="Mungall K.L."/>
            <person name="Oliver K."/>
            <person name="Price C."/>
            <person name="Quail M.A."/>
            <person name="Urushihara H."/>
            <person name="Hernandez J."/>
            <person name="Rabbinowitsch E."/>
            <person name="Steffen D."/>
            <person name="Sanders M."/>
            <person name="Ma J."/>
            <person name="Kohara Y."/>
            <person name="Sharp S."/>
            <person name="Simmonds M.N."/>
            <person name="Spiegler S."/>
            <person name="Tivey A."/>
            <person name="Sugano S."/>
            <person name="White B."/>
            <person name="Walker D."/>
            <person name="Woodward J.R."/>
            <person name="Winckler T."/>
            <person name="Tanaka Y."/>
            <person name="Shaulsky G."/>
            <person name="Schleicher M."/>
            <person name="Weinstock G.M."/>
            <person name="Rosenthal A."/>
            <person name="Cox E.C."/>
            <person name="Chisholm R.L."/>
            <person name="Gibbs R.A."/>
            <person name="Loomis W.F."/>
            <person name="Platzer M."/>
            <person name="Kay R.R."/>
            <person name="Williams J.G."/>
            <person name="Dear P.H."/>
            <person name="Noegel A.A."/>
            <person name="Barrell B.G."/>
            <person name="Kuspa A."/>
        </authorList>
    </citation>
    <scope>NUCLEOTIDE SEQUENCE [LARGE SCALE GENOMIC DNA]</scope>
    <source>
        <strain>AX4</strain>
    </source>
</reference>
<reference key="2">
    <citation type="journal article" date="2008" name="Nucleic Acids Res.">
        <title>Comparative genomics supports a deep evolutionary origin for the large, four-module transcriptional mediator complex.</title>
        <authorList>
            <person name="Bourbon H.-M."/>
        </authorList>
    </citation>
    <scope>NOMENCLATURE</scope>
</reference>
<dbReference type="EMBL" id="AAFI02000161">
    <property type="protein sequence ID" value="EAL62326.1"/>
    <property type="molecule type" value="Genomic_DNA"/>
</dbReference>
<dbReference type="RefSeq" id="XP_635833.1">
    <property type="nucleotide sequence ID" value="XM_630741.1"/>
</dbReference>
<dbReference type="SMR" id="Q54GE5"/>
<dbReference type="FunCoup" id="Q54GE5">
    <property type="interactions" value="255"/>
</dbReference>
<dbReference type="STRING" id="44689.Q54GE5"/>
<dbReference type="PaxDb" id="44689-DDB0266869"/>
<dbReference type="EnsemblProtists" id="EAL62326">
    <property type="protein sequence ID" value="EAL62326"/>
    <property type="gene ID" value="DDB_G0290209"/>
</dbReference>
<dbReference type="GeneID" id="8627541"/>
<dbReference type="KEGG" id="ddi:DDB_G0290209"/>
<dbReference type="dictyBase" id="DDB_G0290209">
    <property type="gene designation" value="med10"/>
</dbReference>
<dbReference type="VEuPathDB" id="AmoebaDB:DDB_G0290209"/>
<dbReference type="eggNOG" id="KOG3046">
    <property type="taxonomic scope" value="Eukaryota"/>
</dbReference>
<dbReference type="HOGENOM" id="CLU_1263554_0_0_1"/>
<dbReference type="InParanoid" id="Q54GE5"/>
<dbReference type="OMA" id="GCIARNQ"/>
<dbReference type="PRO" id="PR:Q54GE5"/>
<dbReference type="Proteomes" id="UP000002195">
    <property type="component" value="Chromosome 5"/>
</dbReference>
<dbReference type="GO" id="GO:0070847">
    <property type="term" value="C:core mediator complex"/>
    <property type="evidence" value="ECO:0000250"/>
    <property type="project" value="dictyBase"/>
</dbReference>
<dbReference type="GO" id="GO:0016592">
    <property type="term" value="C:mediator complex"/>
    <property type="evidence" value="ECO:0007669"/>
    <property type="project" value="InterPro"/>
</dbReference>
<dbReference type="GO" id="GO:0003712">
    <property type="term" value="F:transcription coregulator activity"/>
    <property type="evidence" value="ECO:0007669"/>
    <property type="project" value="InterPro"/>
</dbReference>
<dbReference type="GO" id="GO:0045944">
    <property type="term" value="P:positive regulation of transcription by RNA polymerase II"/>
    <property type="evidence" value="ECO:0000250"/>
    <property type="project" value="dictyBase"/>
</dbReference>
<dbReference type="InterPro" id="IPR052292">
    <property type="entry name" value="Glucose_repression_reg"/>
</dbReference>
<dbReference type="InterPro" id="IPR019145">
    <property type="entry name" value="Mediator_Med10"/>
</dbReference>
<dbReference type="PANTHER" id="PTHR28051">
    <property type="entry name" value="PROTEIN MTL1-RELATED"/>
    <property type="match status" value="1"/>
</dbReference>
<dbReference type="PANTHER" id="PTHR28051:SF1">
    <property type="entry name" value="PROTEIN MTL1-RELATED"/>
    <property type="match status" value="1"/>
</dbReference>
<dbReference type="Pfam" id="PF09748">
    <property type="entry name" value="Med10"/>
    <property type="match status" value="1"/>
</dbReference>
<dbReference type="SUPFAM" id="SSF81995">
    <property type="entry name" value="beta-sandwich domain of Sec23/24"/>
    <property type="match status" value="1"/>
</dbReference>
<accession>Q54GE5</accession>
<proteinExistence type="inferred from homology"/>
<comment type="function">
    <text evidence="1">Component of the Mediator complex, a coactivator involved in the regulated transcription of nearly all RNA polymerase II-dependent genes. Mediator functions as a bridge to convey information from gene-specific regulatory proteins to the basal RNA polymerase II transcription machinery. Mediator is recruited to promoters by direct interactions with regulatory proteins and serves as a scaffold for the assembly of a functional preinitiation complex with RNA polymerase II and the general transcription factors (By similarity).</text>
</comment>
<comment type="subunit">
    <text evidence="1">Component of the Mediator complex.</text>
</comment>
<comment type="subcellular location">
    <subcellularLocation>
        <location evidence="1">Nucleus</location>
    </subcellularLocation>
</comment>
<comment type="similarity">
    <text evidence="4">Belongs to the Mediator complex subunit 10 family.</text>
</comment>
<sequence>MEQQQPQQQNDGQQQQQQQQQHQQQQQQQQQQQQQQQQSEQERIYNKKQEHLPLLQTVEELVEELRRSLIVVEEFQTPSQQLLFDKLNKIINLYEKIESNRHIVNDVEIPLEIFRVIDQSKNPDLYVKETLQNCLSANEKTKGKIESIKNFKKELESHISESFASEYAEYKLLTQKKETQEQQNDDQIKVDDSNNNNNNNNNNNYNNNNNNNNNNINNN</sequence>
<feature type="chain" id="PRO_0000388650" description="Putative mediator of RNA polymerase II transcription subunit 10">
    <location>
        <begin position="1"/>
        <end position="219"/>
    </location>
</feature>
<feature type="region of interest" description="Disordered" evidence="3">
    <location>
        <begin position="1"/>
        <end position="42"/>
    </location>
</feature>
<feature type="region of interest" description="Disordered" evidence="3">
    <location>
        <begin position="177"/>
        <end position="219"/>
    </location>
</feature>
<feature type="coiled-coil region" evidence="2">
    <location>
        <begin position="13"/>
        <end position="74"/>
    </location>
</feature>
<feature type="coiled-coil region" evidence="2">
    <location>
        <begin position="166"/>
        <end position="219"/>
    </location>
</feature>
<feature type="compositionally biased region" description="Low complexity" evidence="3">
    <location>
        <begin position="1"/>
        <end position="39"/>
    </location>
</feature>
<feature type="compositionally biased region" description="Basic and acidic residues" evidence="3">
    <location>
        <begin position="177"/>
        <end position="192"/>
    </location>
</feature>
<feature type="compositionally biased region" description="Low complexity" evidence="3">
    <location>
        <begin position="194"/>
        <end position="219"/>
    </location>
</feature>
<name>MED10_DICDI</name>
<protein>
    <recommendedName>
        <fullName>Putative mediator of RNA polymerase II transcription subunit 10</fullName>
    </recommendedName>
    <alternativeName>
        <fullName>Putative mediator complex subunit 10</fullName>
    </alternativeName>
</protein>
<gene>
    <name type="primary">med10</name>
    <name type="ORF">DDB_G0290209</name>
</gene>